<organism>
    <name type="scientific">Nostoc sp. (strain PCC 7120 / SAG 25.82 / UTEX 2576)</name>
    <dbReference type="NCBI Taxonomy" id="103690"/>
    <lineage>
        <taxon>Bacteria</taxon>
        <taxon>Bacillati</taxon>
        <taxon>Cyanobacteriota</taxon>
        <taxon>Cyanophyceae</taxon>
        <taxon>Nostocales</taxon>
        <taxon>Nostocaceae</taxon>
        <taxon>Nostoc</taxon>
    </lineage>
</organism>
<accession>Q8YY12</accession>
<gene>
    <name type="ordered locus">alr1041</name>
</gene>
<name>FBSB_NOSS1</name>
<keyword id="KW-0113">Calvin cycle</keyword>
<keyword id="KW-0119">Carbohydrate metabolism</keyword>
<keyword id="KW-0378">Hydrolase</keyword>
<keyword id="KW-0464">Manganese</keyword>
<keyword id="KW-0479">Metal-binding</keyword>
<keyword id="KW-1185">Reference proteome</keyword>
<dbReference type="EC" id="3.1.3.11"/>
<dbReference type="EC" id="3.1.3.37"/>
<dbReference type="EMBL" id="BA000019">
    <property type="protein sequence ID" value="BAB72998.1"/>
    <property type="molecule type" value="Genomic_DNA"/>
</dbReference>
<dbReference type="PIR" id="AF1936">
    <property type="entry name" value="AF1936"/>
</dbReference>
<dbReference type="SMR" id="Q8YY12"/>
<dbReference type="STRING" id="103690.gene:10493055"/>
<dbReference type="KEGG" id="ana:alr1041"/>
<dbReference type="eggNOG" id="COG1494">
    <property type="taxonomic scope" value="Bacteria"/>
</dbReference>
<dbReference type="OrthoDB" id="9779353at2"/>
<dbReference type="UniPathway" id="UPA00116"/>
<dbReference type="Proteomes" id="UP000002483">
    <property type="component" value="Chromosome"/>
</dbReference>
<dbReference type="GO" id="GO:0005829">
    <property type="term" value="C:cytosol"/>
    <property type="evidence" value="ECO:0007669"/>
    <property type="project" value="TreeGrafter"/>
</dbReference>
<dbReference type="GO" id="GO:0042132">
    <property type="term" value="F:fructose 1,6-bisphosphate 1-phosphatase activity"/>
    <property type="evidence" value="ECO:0007669"/>
    <property type="project" value="UniProtKB-EC"/>
</dbReference>
<dbReference type="GO" id="GO:0046872">
    <property type="term" value="F:metal ion binding"/>
    <property type="evidence" value="ECO:0007669"/>
    <property type="project" value="UniProtKB-KW"/>
</dbReference>
<dbReference type="GO" id="GO:0050278">
    <property type="term" value="F:sedoheptulose-bisphosphatase activity"/>
    <property type="evidence" value="ECO:0007669"/>
    <property type="project" value="UniProtKB-EC"/>
</dbReference>
<dbReference type="GO" id="GO:0030388">
    <property type="term" value="P:fructose 1,6-bisphosphate metabolic process"/>
    <property type="evidence" value="ECO:0007669"/>
    <property type="project" value="TreeGrafter"/>
</dbReference>
<dbReference type="GO" id="GO:0006094">
    <property type="term" value="P:gluconeogenesis"/>
    <property type="evidence" value="ECO:0007669"/>
    <property type="project" value="InterPro"/>
</dbReference>
<dbReference type="GO" id="GO:0006071">
    <property type="term" value="P:glycerol metabolic process"/>
    <property type="evidence" value="ECO:0007669"/>
    <property type="project" value="InterPro"/>
</dbReference>
<dbReference type="GO" id="GO:0019253">
    <property type="term" value="P:reductive pentose-phosphate cycle"/>
    <property type="evidence" value="ECO:0007669"/>
    <property type="project" value="UniProtKB-UniPathway"/>
</dbReference>
<dbReference type="CDD" id="cd01516">
    <property type="entry name" value="FBPase_glpX"/>
    <property type="match status" value="1"/>
</dbReference>
<dbReference type="FunFam" id="3.40.190.90:FF:000001">
    <property type="entry name" value="Fructose-1,6-bisphosphatase"/>
    <property type="match status" value="1"/>
</dbReference>
<dbReference type="Gene3D" id="3.40.190.90">
    <property type="match status" value="1"/>
</dbReference>
<dbReference type="Gene3D" id="3.30.540.10">
    <property type="entry name" value="Fructose-1,6-Bisphosphatase, subunit A, domain 1"/>
    <property type="match status" value="1"/>
</dbReference>
<dbReference type="InterPro" id="IPR004464">
    <property type="entry name" value="FBPase_class-2/SBPase"/>
</dbReference>
<dbReference type="NCBIfam" id="TIGR00330">
    <property type="entry name" value="glpX"/>
    <property type="match status" value="1"/>
</dbReference>
<dbReference type="PANTHER" id="PTHR30447:SF0">
    <property type="entry name" value="FRUCTOSE-1,6-BISPHOSPHATASE 1 CLASS 2-RELATED"/>
    <property type="match status" value="1"/>
</dbReference>
<dbReference type="PANTHER" id="PTHR30447">
    <property type="entry name" value="FRUCTOSE-1,6-BISPHOSPHATASE CLASS 2"/>
    <property type="match status" value="1"/>
</dbReference>
<dbReference type="Pfam" id="PF03320">
    <property type="entry name" value="FBPase_glpX"/>
    <property type="match status" value="1"/>
</dbReference>
<dbReference type="PIRSF" id="PIRSF004532">
    <property type="entry name" value="GlpX"/>
    <property type="match status" value="1"/>
</dbReference>
<dbReference type="SUPFAM" id="SSF56655">
    <property type="entry name" value="Carbohydrate phosphatase"/>
    <property type="match status" value="1"/>
</dbReference>
<comment type="function">
    <text evidence="1">Catalyzes the hydrolysis of fructose 1,6-bisphosphate (Fru 1,6-P2) and sedoheptulose 1,7-bisphosphate (Sed 1,7-P2) to fructose 6-phosphate and sedoheptulose 7-phosphate, respectively.</text>
</comment>
<comment type="catalytic activity">
    <reaction>
        <text>beta-D-fructose 1,6-bisphosphate + H2O = beta-D-fructose 6-phosphate + phosphate</text>
        <dbReference type="Rhea" id="RHEA:11064"/>
        <dbReference type="ChEBI" id="CHEBI:15377"/>
        <dbReference type="ChEBI" id="CHEBI:32966"/>
        <dbReference type="ChEBI" id="CHEBI:43474"/>
        <dbReference type="ChEBI" id="CHEBI:57634"/>
        <dbReference type="EC" id="3.1.3.11"/>
    </reaction>
</comment>
<comment type="catalytic activity">
    <reaction>
        <text>D-sedoheptulose 1,7-bisphosphate + H2O = D-sedoheptulose 7-phosphate + phosphate</text>
        <dbReference type="Rhea" id="RHEA:17461"/>
        <dbReference type="ChEBI" id="CHEBI:15377"/>
        <dbReference type="ChEBI" id="CHEBI:43474"/>
        <dbReference type="ChEBI" id="CHEBI:57483"/>
        <dbReference type="ChEBI" id="CHEBI:58335"/>
        <dbReference type="EC" id="3.1.3.37"/>
    </reaction>
</comment>
<comment type="cofactor">
    <cofactor evidence="1">
        <name>Mn(2+)</name>
        <dbReference type="ChEBI" id="CHEBI:29035"/>
    </cofactor>
</comment>
<comment type="pathway">
    <text>Carbohydrate biosynthesis; Calvin cycle.</text>
</comment>
<comment type="subunit">
    <text evidence="1">Homotetramer.</text>
</comment>
<comment type="similarity">
    <text evidence="2">Belongs to the FBPase class 2 family.</text>
</comment>
<reference key="1">
    <citation type="journal article" date="2001" name="DNA Res.">
        <title>Complete genomic sequence of the filamentous nitrogen-fixing cyanobacterium Anabaena sp. strain PCC 7120.</title>
        <authorList>
            <person name="Kaneko T."/>
            <person name="Nakamura Y."/>
            <person name="Wolk C.P."/>
            <person name="Kuritz T."/>
            <person name="Sasamoto S."/>
            <person name="Watanabe A."/>
            <person name="Iriguchi M."/>
            <person name="Ishikawa A."/>
            <person name="Kawashima K."/>
            <person name="Kimura T."/>
            <person name="Kishida Y."/>
            <person name="Kohara M."/>
            <person name="Matsumoto M."/>
            <person name="Matsuno A."/>
            <person name="Muraki A."/>
            <person name="Nakazaki N."/>
            <person name="Shimpo S."/>
            <person name="Sugimoto M."/>
            <person name="Takazawa M."/>
            <person name="Yamada M."/>
            <person name="Yasuda M."/>
            <person name="Tabata S."/>
        </authorList>
    </citation>
    <scope>NUCLEOTIDE SEQUENCE [LARGE SCALE GENOMIC DNA]</scope>
    <source>
        <strain>PCC 7120 / SAG 25.82 / UTEX 2576</strain>
    </source>
</reference>
<sequence length="345" mass="36737">MENTLGLEIIEVVEQAAIASAKWMGKGEKNTADQVAVEAMRERMNKIYMRGRIVIGEGERDDAPMLYIGEEVGICTQPNADQLCNPDELVEIDIAVDPCEGTNLVAYGQPGSMAVLAISEKGGLFAAPDFYMKKLAAPPAAKGKVDINKSATENLKILSECLDRSIDELVVVVMKRDRHQGLIKEIRDAGARVQLISDGDVGAAISCGFAGTNVHALMGIGAAPEGVISAAAMRALGGHFQGQLIYDPEVVKTGLIGESKQANLDRLSSMGINDPDKVYDAHELASGENVLFAGCGITSGNLMQGVRFFHGGARTQSLVISSQSQTARFVDTIHMAGQPKTVQLH</sequence>
<feature type="chain" id="PRO_0000342708" description="D-fructose 1,6-bisphosphatase class 2/sedoheptulose 1,7-bisphosphatase">
    <location>
        <begin position="1"/>
        <end position="345"/>
    </location>
</feature>
<feature type="binding site" evidence="1">
    <location>
        <position position="33"/>
    </location>
    <ligand>
        <name>Mn(2+)</name>
        <dbReference type="ChEBI" id="CHEBI:29035"/>
        <label>1</label>
    </ligand>
</feature>
<feature type="binding site" evidence="1">
    <location>
        <position position="57"/>
    </location>
    <ligand>
        <name>Mn(2+)</name>
        <dbReference type="ChEBI" id="CHEBI:29035"/>
        <label>1</label>
    </ligand>
</feature>
<feature type="binding site" evidence="1">
    <location>
        <position position="97"/>
    </location>
    <ligand>
        <name>Mn(2+)</name>
        <dbReference type="ChEBI" id="CHEBI:29035"/>
        <label>2</label>
    </ligand>
</feature>
<feature type="binding site" evidence="1">
    <location>
        <begin position="100"/>
        <end position="102"/>
    </location>
    <ligand>
        <name>substrate</name>
    </ligand>
</feature>
<feature type="binding site" evidence="1">
    <location>
        <position position="100"/>
    </location>
    <ligand>
        <name>Mn(2+)</name>
        <dbReference type="ChEBI" id="CHEBI:29035"/>
        <label>2</label>
    </ligand>
</feature>
<feature type="binding site" evidence="1">
    <location>
        <position position="131"/>
    </location>
    <ligand>
        <name>substrate</name>
    </ligand>
</feature>
<feature type="binding site" evidence="1">
    <location>
        <begin position="176"/>
        <end position="178"/>
    </location>
    <ligand>
        <name>substrate</name>
    </ligand>
</feature>
<feature type="binding site" evidence="1">
    <location>
        <begin position="198"/>
        <end position="200"/>
    </location>
    <ligand>
        <name>substrate</name>
    </ligand>
</feature>
<feature type="binding site" evidence="1">
    <location>
        <position position="225"/>
    </location>
    <ligand>
        <name>Mn(2+)</name>
        <dbReference type="ChEBI" id="CHEBI:29035"/>
        <label>2</label>
    </ligand>
</feature>
<evidence type="ECO:0000250" key="1"/>
<evidence type="ECO:0000305" key="2"/>
<protein>
    <recommendedName>
        <fullName>D-fructose 1,6-bisphosphatase class 2/sedoheptulose 1,7-bisphosphatase</fullName>
        <shortName>FBPase class 2/SBPase</shortName>
        <ecNumber>3.1.3.11</ecNumber>
        <ecNumber>3.1.3.37</ecNumber>
    </recommendedName>
</protein>
<proteinExistence type="inferred from homology"/>